<sequence length="83" mass="9795">MREGKRKNMSNKKVLTGIVVDAKCDKTIKVMVSRMIMHKTYKKIVKKRKNYVVHDEHNQYKCGDVVKIQEHIPISATKRWIVI</sequence>
<evidence type="ECO:0000255" key="1">
    <source>
        <dbReference type="HAMAP-Rule" id="MF_01345"/>
    </source>
</evidence>
<evidence type="ECO:0000305" key="2"/>
<feature type="chain" id="PRO_0000255673" description="Small ribosomal subunit protein uS17">
    <location>
        <begin position="1"/>
        <end position="83"/>
    </location>
</feature>
<gene>
    <name evidence="1" type="primary">rpsQ</name>
    <name type="ordered locus">ECH_0418</name>
</gene>
<accession>Q2GH47</accession>
<protein>
    <recommendedName>
        <fullName evidence="1">Small ribosomal subunit protein uS17</fullName>
    </recommendedName>
    <alternativeName>
        <fullName evidence="2">30S ribosomal protein S17</fullName>
    </alternativeName>
</protein>
<keyword id="KW-1185">Reference proteome</keyword>
<keyword id="KW-0687">Ribonucleoprotein</keyword>
<keyword id="KW-0689">Ribosomal protein</keyword>
<keyword id="KW-0694">RNA-binding</keyword>
<keyword id="KW-0699">rRNA-binding</keyword>
<organism>
    <name type="scientific">Ehrlichia chaffeensis (strain ATCC CRL-10679 / Arkansas)</name>
    <dbReference type="NCBI Taxonomy" id="205920"/>
    <lineage>
        <taxon>Bacteria</taxon>
        <taxon>Pseudomonadati</taxon>
        <taxon>Pseudomonadota</taxon>
        <taxon>Alphaproteobacteria</taxon>
        <taxon>Rickettsiales</taxon>
        <taxon>Anaplasmataceae</taxon>
        <taxon>Ehrlichia</taxon>
    </lineage>
</organism>
<name>RS17_EHRCR</name>
<proteinExistence type="inferred from homology"/>
<comment type="function">
    <text evidence="1">One of the primary rRNA binding proteins, it binds specifically to the 5'-end of 16S ribosomal RNA.</text>
</comment>
<comment type="subunit">
    <text evidence="1">Part of the 30S ribosomal subunit.</text>
</comment>
<comment type="similarity">
    <text evidence="1">Belongs to the universal ribosomal protein uS17 family.</text>
</comment>
<comment type="sequence caution" evidence="2">
    <conflict type="erroneous initiation">
        <sequence resource="EMBL-CDS" id="ABD45445"/>
    </conflict>
</comment>
<dbReference type="EMBL" id="CP000236">
    <property type="protein sequence ID" value="ABD45445.1"/>
    <property type="status" value="ALT_INIT"/>
    <property type="molecule type" value="Genomic_DNA"/>
</dbReference>
<dbReference type="RefSeq" id="WP_044233236.1">
    <property type="nucleotide sequence ID" value="NC_007799.1"/>
</dbReference>
<dbReference type="SMR" id="Q2GH47"/>
<dbReference type="STRING" id="205920.ECH_0418"/>
<dbReference type="KEGG" id="ech:ECH_0418"/>
<dbReference type="eggNOG" id="COG0186">
    <property type="taxonomic scope" value="Bacteria"/>
</dbReference>
<dbReference type="HOGENOM" id="CLU_073626_1_1_5"/>
<dbReference type="OrthoDB" id="9811714at2"/>
<dbReference type="Proteomes" id="UP000008320">
    <property type="component" value="Chromosome"/>
</dbReference>
<dbReference type="GO" id="GO:0022627">
    <property type="term" value="C:cytosolic small ribosomal subunit"/>
    <property type="evidence" value="ECO:0007669"/>
    <property type="project" value="TreeGrafter"/>
</dbReference>
<dbReference type="GO" id="GO:0019843">
    <property type="term" value="F:rRNA binding"/>
    <property type="evidence" value="ECO:0007669"/>
    <property type="project" value="UniProtKB-UniRule"/>
</dbReference>
<dbReference type="GO" id="GO:0003735">
    <property type="term" value="F:structural constituent of ribosome"/>
    <property type="evidence" value="ECO:0007669"/>
    <property type="project" value="InterPro"/>
</dbReference>
<dbReference type="GO" id="GO:0006412">
    <property type="term" value="P:translation"/>
    <property type="evidence" value="ECO:0007669"/>
    <property type="project" value="UniProtKB-UniRule"/>
</dbReference>
<dbReference type="CDD" id="cd00364">
    <property type="entry name" value="Ribosomal_uS17"/>
    <property type="match status" value="1"/>
</dbReference>
<dbReference type="Gene3D" id="2.40.50.140">
    <property type="entry name" value="Nucleic acid-binding proteins"/>
    <property type="match status" value="1"/>
</dbReference>
<dbReference type="HAMAP" id="MF_01345_B">
    <property type="entry name" value="Ribosomal_uS17_B"/>
    <property type="match status" value="1"/>
</dbReference>
<dbReference type="InterPro" id="IPR012340">
    <property type="entry name" value="NA-bd_OB-fold"/>
</dbReference>
<dbReference type="InterPro" id="IPR000266">
    <property type="entry name" value="Ribosomal_uS17"/>
</dbReference>
<dbReference type="InterPro" id="IPR019984">
    <property type="entry name" value="Ribosomal_uS17_bact/chlr"/>
</dbReference>
<dbReference type="NCBIfam" id="NF004123">
    <property type="entry name" value="PRK05610.1"/>
    <property type="match status" value="1"/>
</dbReference>
<dbReference type="NCBIfam" id="TIGR03635">
    <property type="entry name" value="uS17_bact"/>
    <property type="match status" value="1"/>
</dbReference>
<dbReference type="PANTHER" id="PTHR10744">
    <property type="entry name" value="40S RIBOSOMAL PROTEIN S11 FAMILY MEMBER"/>
    <property type="match status" value="1"/>
</dbReference>
<dbReference type="PANTHER" id="PTHR10744:SF1">
    <property type="entry name" value="SMALL RIBOSOMAL SUBUNIT PROTEIN US17M"/>
    <property type="match status" value="1"/>
</dbReference>
<dbReference type="Pfam" id="PF00366">
    <property type="entry name" value="Ribosomal_S17"/>
    <property type="match status" value="1"/>
</dbReference>
<dbReference type="PRINTS" id="PR00973">
    <property type="entry name" value="RIBOSOMALS17"/>
</dbReference>
<dbReference type="SUPFAM" id="SSF50249">
    <property type="entry name" value="Nucleic acid-binding proteins"/>
    <property type="match status" value="1"/>
</dbReference>
<reference key="1">
    <citation type="journal article" date="2006" name="PLoS Genet.">
        <title>Comparative genomics of emerging human ehrlichiosis agents.</title>
        <authorList>
            <person name="Dunning Hotopp J.C."/>
            <person name="Lin M."/>
            <person name="Madupu R."/>
            <person name="Crabtree J."/>
            <person name="Angiuoli S.V."/>
            <person name="Eisen J.A."/>
            <person name="Seshadri R."/>
            <person name="Ren Q."/>
            <person name="Wu M."/>
            <person name="Utterback T.R."/>
            <person name="Smith S."/>
            <person name="Lewis M."/>
            <person name="Khouri H."/>
            <person name="Zhang C."/>
            <person name="Niu H."/>
            <person name="Lin Q."/>
            <person name="Ohashi N."/>
            <person name="Zhi N."/>
            <person name="Nelson W.C."/>
            <person name="Brinkac L.M."/>
            <person name="Dodson R.J."/>
            <person name="Rosovitz M.J."/>
            <person name="Sundaram J.P."/>
            <person name="Daugherty S.C."/>
            <person name="Davidsen T."/>
            <person name="Durkin A.S."/>
            <person name="Gwinn M.L."/>
            <person name="Haft D.H."/>
            <person name="Selengut J.D."/>
            <person name="Sullivan S.A."/>
            <person name="Zafar N."/>
            <person name="Zhou L."/>
            <person name="Benahmed F."/>
            <person name="Forberger H."/>
            <person name="Halpin R."/>
            <person name="Mulligan S."/>
            <person name="Robinson J."/>
            <person name="White O."/>
            <person name="Rikihisa Y."/>
            <person name="Tettelin H."/>
        </authorList>
    </citation>
    <scope>NUCLEOTIDE SEQUENCE [LARGE SCALE GENOMIC DNA]</scope>
    <source>
        <strain>ATCC CRL-10679 / Arkansas</strain>
    </source>
</reference>